<keyword id="KW-0150">Chloroplast</keyword>
<keyword id="KW-0249">Electron transport</keyword>
<keyword id="KW-0472">Membrane</keyword>
<keyword id="KW-0602">Photosynthesis</keyword>
<keyword id="KW-0934">Plastid</keyword>
<keyword id="KW-0793">Thylakoid</keyword>
<keyword id="KW-0812">Transmembrane</keyword>
<keyword id="KW-1133">Transmembrane helix</keyword>
<keyword id="KW-0813">Transport</keyword>
<sequence length="29" mass="3170">MDIVSLAWAALMVVFTFSLSLVVWGRSGL</sequence>
<proteinExistence type="inferred from homology"/>
<name>PETN_BARVE</name>
<evidence type="ECO:0000255" key="1">
    <source>
        <dbReference type="HAMAP-Rule" id="MF_00395"/>
    </source>
</evidence>
<dbReference type="EMBL" id="AP009370">
    <property type="protein sequence ID" value="BAF50103.1"/>
    <property type="molecule type" value="Genomic_DNA"/>
</dbReference>
<dbReference type="RefSeq" id="YP_001123279.1">
    <property type="nucleotide sequence ID" value="NC_009269.1"/>
</dbReference>
<dbReference type="SMR" id="A4QK98"/>
<dbReference type="GeneID" id="4961903"/>
<dbReference type="GO" id="GO:0009535">
    <property type="term" value="C:chloroplast thylakoid membrane"/>
    <property type="evidence" value="ECO:0007669"/>
    <property type="project" value="UniProtKB-SubCell"/>
</dbReference>
<dbReference type="GO" id="GO:0009512">
    <property type="term" value="C:cytochrome b6f complex"/>
    <property type="evidence" value="ECO:0007669"/>
    <property type="project" value="InterPro"/>
</dbReference>
<dbReference type="GO" id="GO:0045158">
    <property type="term" value="F:electron transporter, transferring electrons within cytochrome b6/f complex of photosystem II activity"/>
    <property type="evidence" value="ECO:0007669"/>
    <property type="project" value="InterPro"/>
</dbReference>
<dbReference type="GO" id="GO:0017004">
    <property type="term" value="P:cytochrome complex assembly"/>
    <property type="evidence" value="ECO:0007669"/>
    <property type="project" value="UniProtKB-UniRule"/>
</dbReference>
<dbReference type="GO" id="GO:0015979">
    <property type="term" value="P:photosynthesis"/>
    <property type="evidence" value="ECO:0007669"/>
    <property type="project" value="UniProtKB-KW"/>
</dbReference>
<dbReference type="HAMAP" id="MF_00395">
    <property type="entry name" value="Cytb6_f_PetN"/>
    <property type="match status" value="1"/>
</dbReference>
<dbReference type="InterPro" id="IPR036143">
    <property type="entry name" value="Cytochr_b6-f_cplx_su8_sf"/>
</dbReference>
<dbReference type="InterPro" id="IPR005497">
    <property type="entry name" value="Cytochrome_b6-f_cplx_su8"/>
</dbReference>
<dbReference type="Pfam" id="PF03742">
    <property type="entry name" value="PetN"/>
    <property type="match status" value="1"/>
</dbReference>
<dbReference type="SUPFAM" id="SSF103451">
    <property type="entry name" value="PetN subunit of the cytochrome b6f complex"/>
    <property type="match status" value="1"/>
</dbReference>
<geneLocation type="chloroplast"/>
<reference key="1">
    <citation type="submission" date="2007-03" db="EMBL/GenBank/DDBJ databases">
        <title>Sequencing analysis of Barbarea verna chloroplast DNA.</title>
        <authorList>
            <person name="Hosouchi T."/>
            <person name="Tsuruoka H."/>
            <person name="Kotani H."/>
        </authorList>
    </citation>
    <scope>NUCLEOTIDE SEQUENCE [LARGE SCALE GENOMIC DNA]</scope>
</reference>
<accession>A4QK98</accession>
<feature type="chain" id="PRO_0000355422" description="Cytochrome b6-f complex subunit 8">
    <location>
        <begin position="1"/>
        <end position="29"/>
    </location>
</feature>
<feature type="transmembrane region" description="Helical" evidence="1">
    <location>
        <begin position="3"/>
        <end position="23"/>
    </location>
</feature>
<organism>
    <name type="scientific">Barbarea verna</name>
    <name type="common">Land cress</name>
    <name type="synonym">Erysimum vernum</name>
    <dbReference type="NCBI Taxonomy" id="50458"/>
    <lineage>
        <taxon>Eukaryota</taxon>
        <taxon>Viridiplantae</taxon>
        <taxon>Streptophyta</taxon>
        <taxon>Embryophyta</taxon>
        <taxon>Tracheophyta</taxon>
        <taxon>Spermatophyta</taxon>
        <taxon>Magnoliopsida</taxon>
        <taxon>eudicotyledons</taxon>
        <taxon>Gunneridae</taxon>
        <taxon>Pentapetalae</taxon>
        <taxon>rosids</taxon>
        <taxon>malvids</taxon>
        <taxon>Brassicales</taxon>
        <taxon>Brassicaceae</taxon>
        <taxon>Cardamineae</taxon>
        <taxon>Barbarea</taxon>
    </lineage>
</organism>
<comment type="function">
    <text evidence="1">Component of the cytochrome b6-f complex, which mediates electron transfer between photosystem II (PSII) and photosystem I (PSI), cyclic electron flow around PSI, and state transitions.</text>
</comment>
<comment type="subunit">
    <text evidence="1">The 4 large subunits of the cytochrome b6-f complex are cytochrome b6, subunit IV (17 kDa polypeptide, PetD), cytochrome f and the Rieske protein, while the 4 small subunits are PetG, PetL, PetM and PetN. The complex functions as a dimer.</text>
</comment>
<comment type="subcellular location">
    <subcellularLocation>
        <location evidence="1">Plastid</location>
        <location evidence="1">Chloroplast thylakoid membrane</location>
        <topology evidence="1">Single-pass membrane protein</topology>
    </subcellularLocation>
</comment>
<comment type="similarity">
    <text evidence="1">Belongs to the PetN family.</text>
</comment>
<protein>
    <recommendedName>
        <fullName evidence="1">Cytochrome b6-f complex subunit 8</fullName>
    </recommendedName>
    <alternativeName>
        <fullName evidence="1">Cytochrome b6-f complex subunit PetN</fullName>
    </alternativeName>
    <alternativeName>
        <fullName evidence="1">Cytochrome b6-f complex subunit VIII</fullName>
    </alternativeName>
</protein>
<gene>
    <name evidence="1" type="primary">petN</name>
</gene>